<sequence length="445" mass="46392">MDIKQVTETIAMIEEQNFDVRTITMGISLLDCIDSNIEKAAEKVYHKIVTKAGKLVQVGDDISAELGIPIVNKRVSVTPISIIGAATDATDYVPLAKALDRAAKEIGVNFIGGFSALVQKGYQKGDEILINSIPKALAETDFVCSSVNIGSTKSGINMTAVRDMGRIIKETSAASEMGPAKLVVFANAVEDNPFMAGAFHGVGEADVVINVGVSGPGVVKRALEKVRGQSFDVVAETVKKTAFKITRIGQLVGSLASERLGVKFGIVDLSLAPTPAVGDSVARVLEEMGLETIGTHGTTAALALLNDQVKKGGVMACNQVGGLSGAFIPVSEDEGMIAAVQEGALNLEKLEAMTAICSVGLDMIAIPANTPDTTIAAMIADEAAIGVINQKTTAVRIIPKGKEGDMIEFGGLLGYAPVMPVNKKSSADFIARGGQIPAPIHSFKN</sequence>
<keyword id="KW-1185">Reference proteome</keyword>
<dbReference type="EMBL" id="AE014133">
    <property type="protein sequence ID" value="AAN57859.1"/>
    <property type="molecule type" value="Genomic_DNA"/>
</dbReference>
<dbReference type="RefSeq" id="NP_720553.1">
    <property type="nucleotide sequence ID" value="NC_004350.2"/>
</dbReference>
<dbReference type="RefSeq" id="WP_002263409.1">
    <property type="nucleotide sequence ID" value="NC_004350.2"/>
</dbReference>
<dbReference type="SMR" id="Q8DWH7"/>
<dbReference type="STRING" id="210007.SMU_73"/>
<dbReference type="KEGG" id="smu:SMU_73"/>
<dbReference type="PATRIC" id="fig|210007.7.peg.63"/>
<dbReference type="eggNOG" id="COG2848">
    <property type="taxonomic scope" value="Bacteria"/>
</dbReference>
<dbReference type="HOGENOM" id="CLU_048704_0_0_9"/>
<dbReference type="OrthoDB" id="9763001at2"/>
<dbReference type="PhylomeDB" id="Q8DWH7"/>
<dbReference type="Proteomes" id="UP000002512">
    <property type="component" value="Chromosome"/>
</dbReference>
<dbReference type="CDD" id="cd08025">
    <property type="entry name" value="RNR_PFL_like_DUF711"/>
    <property type="match status" value="1"/>
</dbReference>
<dbReference type="Gene3D" id="3.20.70.20">
    <property type="match status" value="1"/>
</dbReference>
<dbReference type="HAMAP" id="MF_01221">
    <property type="entry name" value="UPF0210"/>
    <property type="match status" value="1"/>
</dbReference>
<dbReference type="InterPro" id="IPR007841">
    <property type="entry name" value="UPF0210"/>
</dbReference>
<dbReference type="NCBIfam" id="NF003700">
    <property type="entry name" value="PRK05313.1"/>
    <property type="match status" value="1"/>
</dbReference>
<dbReference type="PANTHER" id="PTHR37560:SF1">
    <property type="entry name" value="UPF0210 PROTEIN MJ1665"/>
    <property type="match status" value="1"/>
</dbReference>
<dbReference type="PANTHER" id="PTHR37560">
    <property type="entry name" value="UPF0210 PROTEIN SPR0218"/>
    <property type="match status" value="1"/>
</dbReference>
<dbReference type="Pfam" id="PF05167">
    <property type="entry name" value="DUF711"/>
    <property type="match status" value="1"/>
</dbReference>
<dbReference type="SUPFAM" id="SSF51998">
    <property type="entry name" value="PFL-like glycyl radical enzymes"/>
    <property type="match status" value="1"/>
</dbReference>
<proteinExistence type="inferred from homology"/>
<name>Y073_STRMU</name>
<feature type="chain" id="PRO_1000066775" description="UPF0210 protein SMU_73">
    <location>
        <begin position="1"/>
        <end position="445"/>
    </location>
</feature>
<evidence type="ECO:0000255" key="1">
    <source>
        <dbReference type="HAMAP-Rule" id="MF_01221"/>
    </source>
</evidence>
<gene>
    <name type="ordered locus">SMU_73</name>
</gene>
<comment type="subunit">
    <text evidence="1">Homodimer.</text>
</comment>
<comment type="similarity">
    <text evidence="1">Belongs to the UPF0210 family.</text>
</comment>
<accession>Q8DWH7</accession>
<organism>
    <name type="scientific">Streptococcus mutans serotype c (strain ATCC 700610 / UA159)</name>
    <dbReference type="NCBI Taxonomy" id="210007"/>
    <lineage>
        <taxon>Bacteria</taxon>
        <taxon>Bacillati</taxon>
        <taxon>Bacillota</taxon>
        <taxon>Bacilli</taxon>
        <taxon>Lactobacillales</taxon>
        <taxon>Streptococcaceae</taxon>
        <taxon>Streptococcus</taxon>
    </lineage>
</organism>
<protein>
    <recommendedName>
        <fullName evidence="1">UPF0210 protein SMU_73</fullName>
    </recommendedName>
</protein>
<reference key="1">
    <citation type="journal article" date="2002" name="Proc. Natl. Acad. Sci. U.S.A.">
        <title>Genome sequence of Streptococcus mutans UA159, a cariogenic dental pathogen.</title>
        <authorList>
            <person name="Ajdic D.J."/>
            <person name="McShan W.M."/>
            <person name="McLaughlin R.E."/>
            <person name="Savic G."/>
            <person name="Chang J."/>
            <person name="Carson M.B."/>
            <person name="Primeaux C."/>
            <person name="Tian R."/>
            <person name="Kenton S."/>
            <person name="Jia H.G."/>
            <person name="Lin S.P."/>
            <person name="Qian Y."/>
            <person name="Li S."/>
            <person name="Zhu H."/>
            <person name="Najar F.Z."/>
            <person name="Lai H."/>
            <person name="White J."/>
            <person name="Roe B.A."/>
            <person name="Ferretti J.J."/>
        </authorList>
    </citation>
    <scope>NUCLEOTIDE SEQUENCE [LARGE SCALE GENOMIC DNA]</scope>
    <source>
        <strain>ATCC 700610 / UA159</strain>
    </source>
</reference>